<feature type="chain" id="PRO_0000157296" description="Globoside alpha-1,3-N-acetylgalactosaminyltransferase 1">
    <location>
        <begin position="1"/>
        <end position="347"/>
    </location>
</feature>
<feature type="topological domain" description="Cytoplasmic" evidence="4">
    <location>
        <begin position="1"/>
        <end position="6"/>
    </location>
</feature>
<feature type="transmembrane region" description="Helical; Signal-anchor for type II membrane protein" evidence="4">
    <location>
        <begin position="7"/>
        <end position="27"/>
    </location>
</feature>
<feature type="topological domain" description="Lumenal" evidence="4">
    <location>
        <begin position="28"/>
        <end position="347"/>
    </location>
</feature>
<feature type="active site" description="Nucleophile" evidence="2">
    <location>
        <position position="298"/>
    </location>
</feature>
<feature type="binding site" evidence="2">
    <location>
        <begin position="116"/>
        <end position="121"/>
    </location>
    <ligand>
        <name>substrate</name>
    </ligand>
</feature>
<feature type="binding site" evidence="2">
    <location>
        <begin position="206"/>
        <end position="208"/>
    </location>
    <ligand>
        <name>substrate</name>
    </ligand>
</feature>
<feature type="binding site" evidence="2">
    <location>
        <position position="206"/>
    </location>
    <ligand>
        <name>Mn(2+)</name>
        <dbReference type="ChEBI" id="CHEBI:29035"/>
    </ligand>
</feature>
<feature type="binding site" evidence="2">
    <location>
        <position position="208"/>
    </location>
    <ligand>
        <name>Mn(2+)</name>
        <dbReference type="ChEBI" id="CHEBI:29035"/>
    </ligand>
</feature>
<feature type="binding site" evidence="2">
    <location>
        <begin position="228"/>
        <end position="231"/>
    </location>
    <ligand>
        <name>substrate</name>
    </ligand>
</feature>
<feature type="glycosylation site" description="N-linked (GlcNAc...) asparagine" evidence="4">
    <location>
        <position position="108"/>
    </location>
</feature>
<feature type="sequence conflict" description="In Ref. 1; AAL37034." evidence="6" ref="1">
    <original>S</original>
    <variation>P</variation>
    <location>
        <position position="337"/>
    </location>
</feature>
<dbReference type="EC" id="2.4.1.88" evidence="3"/>
<dbReference type="EMBL" id="AF292399">
    <property type="protein sequence ID" value="AAL37034.1"/>
    <property type="molecule type" value="mRNA"/>
</dbReference>
<dbReference type="EMBL" id="AB084789">
    <property type="protein sequence ID" value="BAC23060.2"/>
    <property type="molecule type" value="mRNA"/>
</dbReference>
<dbReference type="EMBL" id="AL772249">
    <property type="status" value="NOT_ANNOTATED_CDS"/>
    <property type="molecule type" value="Genomic_DNA"/>
</dbReference>
<dbReference type="EMBL" id="BC106831">
    <property type="protein sequence ID" value="AAI06832.1"/>
    <property type="molecule type" value="mRNA"/>
</dbReference>
<dbReference type="CCDS" id="CCDS15839.1"/>
<dbReference type="RefSeq" id="NP_631936.2">
    <property type="nucleotide sequence ID" value="NM_139197.3"/>
</dbReference>
<dbReference type="RefSeq" id="XP_006497981.1">
    <property type="nucleotide sequence ID" value="XM_006497918.4"/>
</dbReference>
<dbReference type="RefSeq" id="XP_036016680.1">
    <property type="nucleotide sequence ID" value="XM_036160787.1"/>
</dbReference>
<dbReference type="SMR" id="Q8VI38"/>
<dbReference type="FunCoup" id="Q8VI38">
    <property type="interactions" value="86"/>
</dbReference>
<dbReference type="STRING" id="10090.ENSMUSP00000127071"/>
<dbReference type="SwissLipids" id="SLP:000001914"/>
<dbReference type="CAZy" id="GT6">
    <property type="family name" value="Glycosyltransferase Family 6"/>
</dbReference>
<dbReference type="GlyCosmos" id="Q8VI38">
    <property type="glycosylation" value="1 site, No reported glycans"/>
</dbReference>
<dbReference type="GlyGen" id="Q8VI38">
    <property type="glycosylation" value="1 site"/>
</dbReference>
<dbReference type="PhosphoSitePlus" id="Q8VI38"/>
<dbReference type="PaxDb" id="10090-ENSMUSP00000127071"/>
<dbReference type="ProteomicsDB" id="266779"/>
<dbReference type="Antibodypedia" id="63936">
    <property type="antibodies" value="60 antibodies from 17 providers"/>
</dbReference>
<dbReference type="DNASU" id="227671"/>
<dbReference type="Ensembl" id="ENSMUST00000028172.2">
    <property type="protein sequence ID" value="ENSMUSP00000028172.2"/>
    <property type="gene ID" value="ENSMUSG00000026829.10"/>
</dbReference>
<dbReference type="Ensembl" id="ENSMUST00000163121.8">
    <property type="protein sequence ID" value="ENSMUSP00000127071.2"/>
    <property type="gene ID" value="ENSMUSG00000026829.10"/>
</dbReference>
<dbReference type="GeneID" id="227671"/>
<dbReference type="KEGG" id="mmu:227671"/>
<dbReference type="UCSC" id="uc008iyl.2">
    <property type="organism name" value="mouse"/>
</dbReference>
<dbReference type="AGR" id="MGI:2449143"/>
<dbReference type="CTD" id="26301"/>
<dbReference type="MGI" id="MGI:2449143">
    <property type="gene designation" value="Gbgt1"/>
</dbReference>
<dbReference type="VEuPathDB" id="HostDB:ENSMUSG00000026829"/>
<dbReference type="eggNOG" id="ENOG502QQAJ">
    <property type="taxonomic scope" value="Eukaryota"/>
</dbReference>
<dbReference type="GeneTree" id="ENSGT00950000182858"/>
<dbReference type="HOGENOM" id="CLU_062445_0_1_1"/>
<dbReference type="InParanoid" id="Q8VI38"/>
<dbReference type="OMA" id="RRLITHK"/>
<dbReference type="OrthoDB" id="10013941at2759"/>
<dbReference type="PhylomeDB" id="Q8VI38"/>
<dbReference type="TreeFam" id="TF330991"/>
<dbReference type="UniPathway" id="UPA00378"/>
<dbReference type="BioGRID-ORCS" id="227671">
    <property type="hits" value="1 hit in 78 CRISPR screens"/>
</dbReference>
<dbReference type="ChiTaRS" id="Gbgt1">
    <property type="organism name" value="mouse"/>
</dbReference>
<dbReference type="PRO" id="PR:Q8VI38"/>
<dbReference type="Proteomes" id="UP000000589">
    <property type="component" value="Chromosome 2"/>
</dbReference>
<dbReference type="RNAct" id="Q8VI38">
    <property type="molecule type" value="protein"/>
</dbReference>
<dbReference type="Bgee" id="ENSMUSG00000026829">
    <property type="expression patterns" value="Expressed in mesodermal cell in embryo and 58 other cell types or tissues"/>
</dbReference>
<dbReference type="GO" id="GO:0000139">
    <property type="term" value="C:Golgi membrane"/>
    <property type="evidence" value="ECO:0007669"/>
    <property type="project" value="UniProtKB-SubCell"/>
</dbReference>
<dbReference type="GO" id="GO:0016020">
    <property type="term" value="C:membrane"/>
    <property type="evidence" value="ECO:0000304"/>
    <property type="project" value="UniProtKB"/>
</dbReference>
<dbReference type="GO" id="GO:0047277">
    <property type="term" value="F:globoside alpha-N-acetylgalactosaminyltransferase activity"/>
    <property type="evidence" value="ECO:0000314"/>
    <property type="project" value="UniProtKB"/>
</dbReference>
<dbReference type="GO" id="GO:0046872">
    <property type="term" value="F:metal ion binding"/>
    <property type="evidence" value="ECO:0007669"/>
    <property type="project" value="UniProtKB-KW"/>
</dbReference>
<dbReference type="GO" id="GO:0005975">
    <property type="term" value="P:carbohydrate metabolic process"/>
    <property type="evidence" value="ECO:0007669"/>
    <property type="project" value="InterPro"/>
</dbReference>
<dbReference type="GO" id="GO:0001575">
    <property type="term" value="P:globoside metabolic process"/>
    <property type="evidence" value="ECO:0000250"/>
    <property type="project" value="UniProtKB"/>
</dbReference>
<dbReference type="GO" id="GO:0030259">
    <property type="term" value="P:lipid glycosylation"/>
    <property type="evidence" value="ECO:0000304"/>
    <property type="project" value="UniProtKB"/>
</dbReference>
<dbReference type="GO" id="GO:0006486">
    <property type="term" value="P:protein glycosylation"/>
    <property type="evidence" value="ECO:0007669"/>
    <property type="project" value="UniProtKB-UniPathway"/>
</dbReference>
<dbReference type="CDD" id="cd02515">
    <property type="entry name" value="Glyco_transf_6"/>
    <property type="match status" value="1"/>
</dbReference>
<dbReference type="FunFam" id="3.90.550.10:FF:000022">
    <property type="entry name" value="Histo-blood group ABO system transferase"/>
    <property type="match status" value="1"/>
</dbReference>
<dbReference type="Gene3D" id="3.90.550.10">
    <property type="entry name" value="Spore Coat Polysaccharide Biosynthesis Protein SpsA, Chain A"/>
    <property type="match status" value="1"/>
</dbReference>
<dbReference type="InterPro" id="IPR005076">
    <property type="entry name" value="Glyco_trans_6"/>
</dbReference>
<dbReference type="InterPro" id="IPR029044">
    <property type="entry name" value="Nucleotide-diphossugar_trans"/>
</dbReference>
<dbReference type="PANTHER" id="PTHR10462:SF49">
    <property type="entry name" value="GLOBOSIDE ALPHA-1,3-N-ACETYLGALACTOSAMINYLTRANSFERASE 1"/>
    <property type="match status" value="1"/>
</dbReference>
<dbReference type="PANTHER" id="PTHR10462">
    <property type="entry name" value="GLYCOSYLTRANSFERASE-RELATED"/>
    <property type="match status" value="1"/>
</dbReference>
<dbReference type="Pfam" id="PF03414">
    <property type="entry name" value="Glyco_transf_6"/>
    <property type="match status" value="1"/>
</dbReference>
<dbReference type="SUPFAM" id="SSF53448">
    <property type="entry name" value="Nucleotide-diphospho-sugar transferases"/>
    <property type="match status" value="1"/>
</dbReference>
<sequence length="347" mass="40502">MTRPRLAQGLAFFLLGGTGLWVLWKFIKDWLLVSYIPYYLPCPEFFNMKLPFRKEKPLQPVTQLQYPQPKLLEHGPTELLTLTPWLAPIVSEGTFDPELLKSMYQPLNLTIGVTVFAVGKYTCFIQRFLESAEEFFMRGYQVHYYLFTHDPTAVPRVPLGPGRLLSIIPIQGYSRWEEISMRRMETINKHIAKRAHKEVDYLFCVDVDMVFRNPWGPETLGDLVAAIHPGYFAVPRRKFPYERRQVSSAFVADNEGDFYYGGALFGGRVARVYEFTRACHMAILADKANSIMAAWQEESHLNRHFIWHKPSKVLSPEYLWDERKPRPRSLKMIRFSSVKKNANWLRT</sequence>
<keyword id="KW-0325">Glycoprotein</keyword>
<keyword id="KW-0328">Glycosyltransferase</keyword>
<keyword id="KW-0333">Golgi apparatus</keyword>
<keyword id="KW-0464">Manganese</keyword>
<keyword id="KW-0472">Membrane</keyword>
<keyword id="KW-0479">Metal-binding</keyword>
<keyword id="KW-1185">Reference proteome</keyword>
<keyword id="KW-0735">Signal-anchor</keyword>
<keyword id="KW-0808">Transferase</keyword>
<keyword id="KW-0812">Transmembrane</keyword>
<keyword id="KW-1133">Transmembrane helix</keyword>
<accession>Q8VI38</accession>
<accession>Q3KPA1</accession>
<accession>Q8CJF3</accession>
<name>GBGT1_MOUSE</name>
<evidence type="ECO:0000250" key="1"/>
<evidence type="ECO:0000250" key="2">
    <source>
        <dbReference type="UniProtKB" id="P14769"/>
    </source>
</evidence>
<evidence type="ECO:0000250" key="3">
    <source>
        <dbReference type="UniProtKB" id="Q95158"/>
    </source>
</evidence>
<evidence type="ECO:0000255" key="4"/>
<evidence type="ECO:0000269" key="5">
    <source>
    </source>
</evidence>
<evidence type="ECO:0000305" key="6"/>
<evidence type="ECO:0000305" key="7">
    <source>
    </source>
</evidence>
<evidence type="ECO:0000312" key="8">
    <source>
        <dbReference type="MGI" id="MGI:2449143"/>
    </source>
</evidence>
<protein>
    <recommendedName>
        <fullName evidence="6">Globoside alpha-1,3-N-acetylgalactosaminyltransferase 1</fullName>
        <ecNumber evidence="3">2.4.1.88</ecNumber>
    </recommendedName>
    <alternativeName>
        <fullName>Forssman glycolipid synthase</fullName>
    </alternativeName>
</protein>
<organism>
    <name type="scientific">Mus musculus</name>
    <name type="common">Mouse</name>
    <dbReference type="NCBI Taxonomy" id="10090"/>
    <lineage>
        <taxon>Eukaryota</taxon>
        <taxon>Metazoa</taxon>
        <taxon>Chordata</taxon>
        <taxon>Craniata</taxon>
        <taxon>Vertebrata</taxon>
        <taxon>Euteleostomi</taxon>
        <taxon>Mammalia</taxon>
        <taxon>Eutheria</taxon>
        <taxon>Euarchontoglires</taxon>
        <taxon>Glires</taxon>
        <taxon>Rodentia</taxon>
        <taxon>Myomorpha</taxon>
        <taxon>Muroidea</taxon>
        <taxon>Muridae</taxon>
        <taxon>Murinae</taxon>
        <taxon>Mus</taxon>
        <taxon>Mus</taxon>
    </lineage>
</organism>
<gene>
    <name evidence="8" type="primary">Gbgt1</name>
    <name type="synonym">Fgs</name>
</gene>
<comment type="function">
    <text evidence="5">Catalyzes the formation of Forssman glycolipid via the addition of N-acetylgalactosamine (GalNAc) in alpha-1,3-linkage to GalNAcb-1,3Gala-1,4Galb-1,4GlcCer (Gb4Cer) (PubMed:14573676). Forssman glycolipid (also called Forssman antigen; FG) probably serves for adherence of some pathogens (PubMed:14573676). Conversely, it diminishes Shiga toxins susceptibility (PubMed:14573676).</text>
</comment>
<comment type="catalytic activity">
    <reaction evidence="3">
        <text>a globoside Gb4Cer (d18:1(4E)) + UDP-N-acetyl-alpha-D-galactosamine = a globoside Forssman (d18:1(4E)) + UDP + H(+)</text>
        <dbReference type="Rhea" id="RHEA:22164"/>
        <dbReference type="ChEBI" id="CHEBI:15378"/>
        <dbReference type="ChEBI" id="CHEBI:18056"/>
        <dbReference type="ChEBI" id="CHEBI:18259"/>
        <dbReference type="ChEBI" id="CHEBI:58223"/>
        <dbReference type="ChEBI" id="CHEBI:67138"/>
        <dbReference type="EC" id="2.4.1.88"/>
    </reaction>
    <physiologicalReaction direction="left-to-right" evidence="3">
        <dbReference type="Rhea" id="RHEA:22165"/>
    </physiologicalReaction>
</comment>
<comment type="catalytic activity">
    <reaction evidence="5">
        <text>a globoside Gb4Cer + UDP-N-acetyl-alpha-D-galactosamine = a globoside IV3GalNAc-Gb4Cer + UDP + H(+)</text>
        <dbReference type="Rhea" id="RHEA:56568"/>
        <dbReference type="ChEBI" id="CHEBI:15378"/>
        <dbReference type="ChEBI" id="CHEBI:58223"/>
        <dbReference type="ChEBI" id="CHEBI:67138"/>
        <dbReference type="ChEBI" id="CHEBI:88167"/>
        <dbReference type="ChEBI" id="CHEBI:90400"/>
    </reaction>
    <physiologicalReaction direction="left-to-right" evidence="7">
        <dbReference type="Rhea" id="RHEA:56569"/>
    </physiologicalReaction>
</comment>
<comment type="cofactor">
    <cofactor evidence="2">
        <name>Mn(2+)</name>
        <dbReference type="ChEBI" id="CHEBI:29035"/>
    </cofactor>
    <text evidence="2">Binds 1 Mn(2+) ion per subunit.</text>
</comment>
<comment type="pathway">
    <text>Protein modification; protein glycosylation.</text>
</comment>
<comment type="subcellular location">
    <subcellularLocation>
        <location evidence="1">Golgi apparatus membrane</location>
        <topology evidence="1">Single-pass type II membrane protein</topology>
    </subcellularLocation>
</comment>
<comment type="domain">
    <text evidence="1">The conserved DXD motif is involved in cofactor binding. The manganese ion interacts with the beta-phosphate group of UDP and may also have a role in catalysis (By similarity).</text>
</comment>
<comment type="similarity">
    <text evidence="6">Belongs to the glycosyltransferase 6 family.</text>
</comment>
<comment type="online information" name="Functional Glycomics Gateway - GTase">
    <link uri="http://www.functionalglycomics.org/glycomics/search/jsp/landing.jsp?query=gt_mou_504"/>
    <text>Globoside alpha-1,3-N-acetylgalactosaminyltransferase 1</text>
</comment>
<proteinExistence type="evidence at protein level"/>
<reference key="1">
    <citation type="journal article" date="2003" name="Infect. Immun.">
        <title>Forssman synthetase expression results in diminished shiga toxin susceptibility: a role for glycolipids in determining host-microbe interactions.</title>
        <authorList>
            <person name="Elliott S.P."/>
            <person name="Yu M."/>
            <person name="Xu H."/>
            <person name="Haslam D.B."/>
        </authorList>
    </citation>
    <scope>NUCLEOTIDE SEQUENCE [MRNA]</scope>
    <scope>FUNCTION</scope>
    <scope>CATALYTIC ACTIVITY</scope>
</reference>
<reference key="2">
    <citation type="submission" date="2002-05" db="EMBL/GenBank/DDBJ databases">
        <title>Preferential expression of Forssman glycolipid in undifferentiated ES cells and its chromosomal localization in mouse.</title>
        <authorList>
            <person name="Watanobe T."/>
            <person name="Shimizu M."/>
            <person name="Nakano M."/>
            <person name="Handa S."/>
            <person name="Yoshida M."/>
            <person name="Kushi Y."/>
        </authorList>
    </citation>
    <scope>NUCLEOTIDE SEQUENCE [MRNA]</scope>
</reference>
<reference key="3">
    <citation type="journal article" date="2009" name="PLoS Biol.">
        <title>Lineage-specific biology revealed by a finished genome assembly of the mouse.</title>
        <authorList>
            <person name="Church D.M."/>
            <person name="Goodstadt L."/>
            <person name="Hillier L.W."/>
            <person name="Zody M.C."/>
            <person name="Goldstein S."/>
            <person name="She X."/>
            <person name="Bult C.J."/>
            <person name="Agarwala R."/>
            <person name="Cherry J.L."/>
            <person name="DiCuccio M."/>
            <person name="Hlavina W."/>
            <person name="Kapustin Y."/>
            <person name="Meric P."/>
            <person name="Maglott D."/>
            <person name="Birtle Z."/>
            <person name="Marques A.C."/>
            <person name="Graves T."/>
            <person name="Zhou S."/>
            <person name="Teague B."/>
            <person name="Potamousis K."/>
            <person name="Churas C."/>
            <person name="Place M."/>
            <person name="Herschleb J."/>
            <person name="Runnheim R."/>
            <person name="Forrest D."/>
            <person name="Amos-Landgraf J."/>
            <person name="Schwartz D.C."/>
            <person name="Cheng Z."/>
            <person name="Lindblad-Toh K."/>
            <person name="Eichler E.E."/>
            <person name="Ponting C.P."/>
        </authorList>
    </citation>
    <scope>NUCLEOTIDE SEQUENCE [LARGE SCALE GENOMIC DNA]</scope>
    <source>
        <strain>C57BL/6J</strain>
    </source>
</reference>
<reference key="4">
    <citation type="journal article" date="2004" name="Genome Res.">
        <title>The status, quality, and expansion of the NIH full-length cDNA project: the Mammalian Gene Collection (MGC).</title>
        <authorList>
            <consortium name="The MGC Project Team"/>
        </authorList>
    </citation>
    <scope>NUCLEOTIDE SEQUENCE [LARGE SCALE MRNA]</scope>
</reference>